<gene>
    <name evidence="1" type="primary">norR</name>
    <name type="ordered locus">SeHA_C3025</name>
</gene>
<reference key="1">
    <citation type="journal article" date="2011" name="J. Bacteriol.">
        <title>Comparative genomics of 28 Salmonella enterica isolates: evidence for CRISPR-mediated adaptive sublineage evolution.</title>
        <authorList>
            <person name="Fricke W.F."/>
            <person name="Mammel M.K."/>
            <person name="McDermott P.F."/>
            <person name="Tartera C."/>
            <person name="White D.G."/>
            <person name="Leclerc J.E."/>
            <person name="Ravel J."/>
            <person name="Cebula T.A."/>
        </authorList>
    </citation>
    <scope>NUCLEOTIDE SEQUENCE [LARGE SCALE GENOMIC DNA]</scope>
    <source>
        <strain>SL476</strain>
    </source>
</reference>
<organism>
    <name type="scientific">Salmonella heidelberg (strain SL476)</name>
    <dbReference type="NCBI Taxonomy" id="454169"/>
    <lineage>
        <taxon>Bacteria</taxon>
        <taxon>Pseudomonadati</taxon>
        <taxon>Pseudomonadota</taxon>
        <taxon>Gammaproteobacteria</taxon>
        <taxon>Enterobacterales</taxon>
        <taxon>Enterobacteriaceae</taxon>
        <taxon>Salmonella</taxon>
    </lineage>
</organism>
<dbReference type="EMBL" id="CP001120">
    <property type="protein sequence ID" value="ACF68007.1"/>
    <property type="molecule type" value="Genomic_DNA"/>
</dbReference>
<dbReference type="RefSeq" id="WP_000010806.1">
    <property type="nucleotide sequence ID" value="NC_011083.1"/>
</dbReference>
<dbReference type="SMR" id="B4TF23"/>
<dbReference type="KEGG" id="seh:SeHA_C3025"/>
<dbReference type="HOGENOM" id="CLU_000445_125_2_6"/>
<dbReference type="UniPathway" id="UPA00638"/>
<dbReference type="Proteomes" id="UP000001866">
    <property type="component" value="Chromosome"/>
</dbReference>
<dbReference type="GO" id="GO:0005524">
    <property type="term" value="F:ATP binding"/>
    <property type="evidence" value="ECO:0007669"/>
    <property type="project" value="UniProtKB-UniRule"/>
</dbReference>
<dbReference type="GO" id="GO:0016887">
    <property type="term" value="F:ATP hydrolysis activity"/>
    <property type="evidence" value="ECO:0007669"/>
    <property type="project" value="InterPro"/>
</dbReference>
<dbReference type="GO" id="GO:0003677">
    <property type="term" value="F:DNA binding"/>
    <property type="evidence" value="ECO:0007669"/>
    <property type="project" value="UniProtKB-KW"/>
</dbReference>
<dbReference type="GO" id="GO:0003700">
    <property type="term" value="F:DNA-binding transcription factor activity"/>
    <property type="evidence" value="ECO:0007669"/>
    <property type="project" value="UniProtKB-UniRule"/>
</dbReference>
<dbReference type="GO" id="GO:0000160">
    <property type="term" value="P:phosphorelay signal transduction system"/>
    <property type="evidence" value="ECO:0007669"/>
    <property type="project" value="UniProtKB-UniRule"/>
</dbReference>
<dbReference type="CDD" id="cd00009">
    <property type="entry name" value="AAA"/>
    <property type="match status" value="1"/>
</dbReference>
<dbReference type="FunFam" id="1.10.8.60:FF:000045">
    <property type="entry name" value="Anaerobic nitric oxide reductase transcription regulator NorR"/>
    <property type="match status" value="1"/>
</dbReference>
<dbReference type="FunFam" id="3.30.450.40:FF:000021">
    <property type="entry name" value="Anaerobic nitric oxide reductase transcription regulator NorR"/>
    <property type="match status" value="1"/>
</dbReference>
<dbReference type="FunFam" id="3.40.50.300:FF:000006">
    <property type="entry name" value="DNA-binding transcriptional regulator NtrC"/>
    <property type="match status" value="1"/>
</dbReference>
<dbReference type="Gene3D" id="1.10.8.60">
    <property type="match status" value="1"/>
</dbReference>
<dbReference type="Gene3D" id="3.30.450.40">
    <property type="match status" value="1"/>
</dbReference>
<dbReference type="Gene3D" id="1.10.10.60">
    <property type="entry name" value="Homeodomain-like"/>
    <property type="match status" value="1"/>
</dbReference>
<dbReference type="Gene3D" id="3.40.50.300">
    <property type="entry name" value="P-loop containing nucleotide triphosphate hydrolases"/>
    <property type="match status" value="1"/>
</dbReference>
<dbReference type="HAMAP" id="MF_01314">
    <property type="entry name" value="NorR"/>
    <property type="match status" value="1"/>
</dbReference>
<dbReference type="InterPro" id="IPR003593">
    <property type="entry name" value="AAA+_ATPase"/>
</dbReference>
<dbReference type="InterPro" id="IPR003018">
    <property type="entry name" value="GAF"/>
</dbReference>
<dbReference type="InterPro" id="IPR029016">
    <property type="entry name" value="GAF-like_dom_sf"/>
</dbReference>
<dbReference type="InterPro" id="IPR009057">
    <property type="entry name" value="Homeodomain-like_sf"/>
</dbReference>
<dbReference type="InterPro" id="IPR023944">
    <property type="entry name" value="NorR"/>
</dbReference>
<dbReference type="InterPro" id="IPR027417">
    <property type="entry name" value="P-loop_NTPase"/>
</dbReference>
<dbReference type="InterPro" id="IPR002078">
    <property type="entry name" value="Sigma_54_int"/>
</dbReference>
<dbReference type="InterPro" id="IPR025662">
    <property type="entry name" value="Sigma_54_int_dom_ATP-bd_1"/>
</dbReference>
<dbReference type="InterPro" id="IPR025943">
    <property type="entry name" value="Sigma_54_int_dom_ATP-bd_2"/>
</dbReference>
<dbReference type="InterPro" id="IPR025944">
    <property type="entry name" value="Sigma_54_int_dom_CS"/>
</dbReference>
<dbReference type="NCBIfam" id="NF003451">
    <property type="entry name" value="PRK05022.1"/>
    <property type="match status" value="1"/>
</dbReference>
<dbReference type="PANTHER" id="PTHR32071:SF35">
    <property type="entry name" value="ANAEROBIC NITRIC OXIDE REDUCTASE TRANSCRIPTION REGULATOR NORR"/>
    <property type="match status" value="1"/>
</dbReference>
<dbReference type="PANTHER" id="PTHR32071">
    <property type="entry name" value="TRANSCRIPTIONAL REGULATORY PROTEIN"/>
    <property type="match status" value="1"/>
</dbReference>
<dbReference type="Pfam" id="PF01590">
    <property type="entry name" value="GAF"/>
    <property type="match status" value="1"/>
</dbReference>
<dbReference type="Pfam" id="PF00158">
    <property type="entry name" value="Sigma54_activat"/>
    <property type="match status" value="1"/>
</dbReference>
<dbReference type="SMART" id="SM00382">
    <property type="entry name" value="AAA"/>
    <property type="match status" value="1"/>
</dbReference>
<dbReference type="SMART" id="SM00065">
    <property type="entry name" value="GAF"/>
    <property type="match status" value="1"/>
</dbReference>
<dbReference type="SUPFAM" id="SSF55781">
    <property type="entry name" value="GAF domain-like"/>
    <property type="match status" value="1"/>
</dbReference>
<dbReference type="SUPFAM" id="SSF46689">
    <property type="entry name" value="Homeodomain-like"/>
    <property type="match status" value="1"/>
</dbReference>
<dbReference type="SUPFAM" id="SSF52540">
    <property type="entry name" value="P-loop containing nucleoside triphosphate hydrolases"/>
    <property type="match status" value="1"/>
</dbReference>
<dbReference type="PROSITE" id="PS00675">
    <property type="entry name" value="SIGMA54_INTERACT_1"/>
    <property type="match status" value="1"/>
</dbReference>
<dbReference type="PROSITE" id="PS00676">
    <property type="entry name" value="SIGMA54_INTERACT_2"/>
    <property type="match status" value="1"/>
</dbReference>
<dbReference type="PROSITE" id="PS00688">
    <property type="entry name" value="SIGMA54_INTERACT_3"/>
    <property type="match status" value="1"/>
</dbReference>
<dbReference type="PROSITE" id="PS50045">
    <property type="entry name" value="SIGMA54_INTERACT_4"/>
    <property type="match status" value="1"/>
</dbReference>
<keyword id="KW-0067">ATP-binding</keyword>
<keyword id="KW-0238">DNA-binding</keyword>
<keyword id="KW-0547">Nucleotide-binding</keyword>
<keyword id="KW-0597">Phosphoprotein</keyword>
<keyword id="KW-0804">Transcription</keyword>
<keyword id="KW-0805">Transcription regulation</keyword>
<proteinExistence type="inferred from homology"/>
<name>NORR_SALHS</name>
<evidence type="ECO:0000255" key="1">
    <source>
        <dbReference type="HAMAP-Rule" id="MF_01314"/>
    </source>
</evidence>
<comment type="function">
    <text evidence="1">Required for the expression of anaerobic nitric oxide (NO) reductase, acts as a transcriptional activator for at least the norVW operon. Activation also requires sigma-54.</text>
</comment>
<comment type="pathway">
    <text evidence="1">Nitrogen metabolism; nitric oxide reduction.</text>
</comment>
<sequence length="506" mass="55369">MSFSVEVLAGIAIELQRGIGHQDRFQRLITTLRQVLACDASALLRYESRQFIPLAIDGLAQDVLGRRFTLEGHPRLEAIARAGDVVRFPADSDLPDPYDGLIPGQESLKVHACVGLPLFAGQNLIGALTLDAMTPEQFEVFSDEELRLVAALAAGALSNALLIEQLESQNMLPGSSGVFEPIKETHMIGLSPAMTQLKKEIEIVAGSDLNVLIGGETGTGKELVAKAIHQGSPRAVNPLVYLNCAALPESVAESELFGHVKGAFTGAISNRSGKFEMADNGTLFLDEIGELSLALQAKLLRVLQYGDIQRVGDDRSLRVDVRVLAATNRDLREEVLAGRFRADLFHRLSVFPLFVPPLHERGDDVVLLAGYFCEQCRLRLGLSRVVLSPDARRHLLNYGWPGNVRELEHAIHRAVVLARATRAGDEVVLEAQHFALSEDVLPAPPAESFLALPACRNLRESTENFQREMIRQALAQNNHNWAASARALETDVANLHRLAKRLGLKD</sequence>
<accession>B4TF23</accession>
<feature type="chain" id="PRO_1000141200" description="Anaerobic nitric oxide reductase transcription regulator NorR">
    <location>
        <begin position="1"/>
        <end position="506"/>
    </location>
</feature>
<feature type="domain" description="Sigma-54 factor interaction" evidence="1">
    <location>
        <begin position="187"/>
        <end position="416"/>
    </location>
</feature>
<feature type="DNA-binding region" description="H-T-H motif" evidence="1">
    <location>
        <begin position="481"/>
        <end position="500"/>
    </location>
</feature>
<feature type="binding site" evidence="1">
    <location>
        <begin position="215"/>
        <end position="222"/>
    </location>
    <ligand>
        <name>ATP</name>
        <dbReference type="ChEBI" id="CHEBI:30616"/>
    </ligand>
</feature>
<feature type="binding site" evidence="1">
    <location>
        <begin position="278"/>
        <end position="287"/>
    </location>
    <ligand>
        <name>ATP</name>
        <dbReference type="ChEBI" id="CHEBI:30616"/>
    </ligand>
</feature>
<feature type="modified residue" description="4-aspartylphosphate" evidence="1">
    <location>
        <position position="57"/>
    </location>
</feature>
<protein>
    <recommendedName>
        <fullName evidence="1">Anaerobic nitric oxide reductase transcription regulator NorR</fullName>
    </recommendedName>
</protein>